<keyword id="KW-0324">Glycolysis</keyword>
<keyword id="KW-0413">Isomerase</keyword>
<organism>
    <name type="scientific">Pyrobaculum islandicum (strain DSM 4184 / JCM 9189 / GEO3)</name>
    <dbReference type="NCBI Taxonomy" id="384616"/>
    <lineage>
        <taxon>Archaea</taxon>
        <taxon>Thermoproteota</taxon>
        <taxon>Thermoprotei</taxon>
        <taxon>Thermoproteales</taxon>
        <taxon>Thermoproteaceae</taxon>
        <taxon>Pyrobaculum</taxon>
    </lineage>
</organism>
<evidence type="ECO:0000255" key="1">
    <source>
        <dbReference type="HAMAP-Rule" id="MF_01402"/>
    </source>
</evidence>
<name>APGM_PYRIL</name>
<proteinExistence type="inferred from homology"/>
<accession>A1RTD5</accession>
<protein>
    <recommendedName>
        <fullName evidence="1">2,3-bisphosphoglycerate-independent phosphoglycerate mutase</fullName>
        <shortName evidence="1">BPG-independent PGAM</shortName>
        <shortName evidence="1">Phosphoglyceromutase</shortName>
        <shortName evidence="1">aPGAM</shortName>
        <ecNumber evidence="1">5.4.2.12</ecNumber>
    </recommendedName>
</protein>
<feature type="chain" id="PRO_1000087370" description="2,3-bisphosphoglycerate-independent phosphoglycerate mutase">
    <location>
        <begin position="1"/>
        <end position="411"/>
    </location>
</feature>
<sequence>MPSVFWILFDGGGDRPVGGRTPFHTAFKPTIDYLTSLGSCGILDPIAPGVRPGSDTAHLALFGYDPYKYYTGRGAFEALGAGLELKPGDVAFRTNLATIDDNGMVLDRRAGRYITPEEVEAVENLMANIAEDIKRKYGVEIIYKSTVEHRGVLVLRGSVSHKVSDTDPHKVGAKLLESRPLENSKEAVLTAEVINEVTKRFSEVAKDLEINRKRRLEGRLPINAILLRGGGYMPQIEPVRERYNIKAAAIAGVALIRGVARAVGMDVYTARGLGGTKDDMFDEAVRLAVELMGRYDLVFLHVKGTDSASHDGDFKGKVSVIERLDKALTPYLDKLLNNYVVITSDHATPISIKEHTGESVPILLYGPDVVTDDVSKFSELTCWRGALGRIRGIDVMPILGSYLALTEKFGE</sequence>
<dbReference type="EC" id="5.4.2.12" evidence="1"/>
<dbReference type="EMBL" id="CP000504">
    <property type="protein sequence ID" value="ABL88217.1"/>
    <property type="molecule type" value="Genomic_DNA"/>
</dbReference>
<dbReference type="RefSeq" id="WP_011762792.1">
    <property type="nucleotide sequence ID" value="NC_008701.1"/>
</dbReference>
<dbReference type="SMR" id="A1RTD5"/>
<dbReference type="STRING" id="384616.Pisl_1043"/>
<dbReference type="GeneID" id="4617997"/>
<dbReference type="KEGG" id="pis:Pisl_1043"/>
<dbReference type="eggNOG" id="arCOG01696">
    <property type="taxonomic scope" value="Archaea"/>
</dbReference>
<dbReference type="HOGENOM" id="CLU_034906_2_0_2"/>
<dbReference type="OrthoDB" id="52918at2157"/>
<dbReference type="UniPathway" id="UPA00109">
    <property type="reaction ID" value="UER00186"/>
</dbReference>
<dbReference type="Proteomes" id="UP000002595">
    <property type="component" value="Chromosome"/>
</dbReference>
<dbReference type="GO" id="GO:0046872">
    <property type="term" value="F:metal ion binding"/>
    <property type="evidence" value="ECO:0007669"/>
    <property type="project" value="InterPro"/>
</dbReference>
<dbReference type="GO" id="GO:0004619">
    <property type="term" value="F:phosphoglycerate mutase activity"/>
    <property type="evidence" value="ECO:0007669"/>
    <property type="project" value="UniProtKB-EC"/>
</dbReference>
<dbReference type="GO" id="GO:0006096">
    <property type="term" value="P:glycolytic process"/>
    <property type="evidence" value="ECO:0007669"/>
    <property type="project" value="UniProtKB-UniRule"/>
</dbReference>
<dbReference type="CDD" id="cd16011">
    <property type="entry name" value="iPGM_like"/>
    <property type="match status" value="1"/>
</dbReference>
<dbReference type="Gene3D" id="3.40.720.10">
    <property type="entry name" value="Alkaline Phosphatase, subunit A"/>
    <property type="match status" value="1"/>
</dbReference>
<dbReference type="Gene3D" id="3.30.70.2130">
    <property type="entry name" value="Metalloenzyme domain"/>
    <property type="match status" value="1"/>
</dbReference>
<dbReference type="HAMAP" id="MF_01402_A">
    <property type="entry name" value="ApgM_A"/>
    <property type="match status" value="1"/>
</dbReference>
<dbReference type="InterPro" id="IPR017850">
    <property type="entry name" value="Alkaline_phosphatase_core_sf"/>
</dbReference>
<dbReference type="InterPro" id="IPR023665">
    <property type="entry name" value="ApgAM_prokaryotes"/>
</dbReference>
<dbReference type="InterPro" id="IPR006124">
    <property type="entry name" value="Metalloenzyme"/>
</dbReference>
<dbReference type="InterPro" id="IPR004456">
    <property type="entry name" value="Pglycerate_mutase_ApgM"/>
</dbReference>
<dbReference type="InterPro" id="IPR042253">
    <property type="entry name" value="Pglycerate_mutase_ApgM_sf"/>
</dbReference>
<dbReference type="NCBIfam" id="TIGR00306">
    <property type="entry name" value="apgM"/>
    <property type="match status" value="1"/>
</dbReference>
<dbReference type="NCBIfam" id="NF003104">
    <property type="entry name" value="PRK04024.1"/>
    <property type="match status" value="1"/>
</dbReference>
<dbReference type="PANTHER" id="PTHR31209">
    <property type="entry name" value="COFACTOR-INDEPENDENT PHOSPHOGLYCERATE MUTASE"/>
    <property type="match status" value="1"/>
</dbReference>
<dbReference type="PANTHER" id="PTHR31209:SF0">
    <property type="entry name" value="METALLOENZYME DOMAIN-CONTAINING PROTEIN"/>
    <property type="match status" value="1"/>
</dbReference>
<dbReference type="Pfam" id="PF01676">
    <property type="entry name" value="Metalloenzyme"/>
    <property type="match status" value="1"/>
</dbReference>
<dbReference type="Pfam" id="PF10143">
    <property type="entry name" value="PhosphMutase"/>
    <property type="match status" value="1"/>
</dbReference>
<dbReference type="PIRSF" id="PIRSF006392">
    <property type="entry name" value="IPGAM_arch"/>
    <property type="match status" value="1"/>
</dbReference>
<dbReference type="SUPFAM" id="SSF53649">
    <property type="entry name" value="Alkaline phosphatase-like"/>
    <property type="match status" value="1"/>
</dbReference>
<reference key="1">
    <citation type="submission" date="2006-12" db="EMBL/GenBank/DDBJ databases">
        <title>Complete sequence of Pyrobaculum islandicum DSM 4184.</title>
        <authorList>
            <person name="Copeland A."/>
            <person name="Lucas S."/>
            <person name="Lapidus A."/>
            <person name="Barry K."/>
            <person name="Detter J.C."/>
            <person name="Glavina del Rio T."/>
            <person name="Dalin E."/>
            <person name="Tice H."/>
            <person name="Pitluck S."/>
            <person name="Meincke L."/>
            <person name="Brettin T."/>
            <person name="Bruce D."/>
            <person name="Han C."/>
            <person name="Tapia R."/>
            <person name="Gilna P."/>
            <person name="Schmutz J."/>
            <person name="Larimer F."/>
            <person name="Land M."/>
            <person name="Hauser L."/>
            <person name="Kyrpides N."/>
            <person name="Mikhailova N."/>
            <person name="Cozen A.E."/>
            <person name="Fitz-Gibbon S.T."/>
            <person name="House C.H."/>
            <person name="Saltikov C."/>
            <person name="Lowe T."/>
            <person name="Richardson P."/>
        </authorList>
    </citation>
    <scope>NUCLEOTIDE SEQUENCE [LARGE SCALE GENOMIC DNA]</scope>
    <source>
        <strain>DSM 4184 / JCM 9189 / GEO3</strain>
    </source>
</reference>
<comment type="function">
    <text evidence="1">Catalyzes the interconversion of 2-phosphoglycerate and 3-phosphoglycerate.</text>
</comment>
<comment type="catalytic activity">
    <reaction evidence="1">
        <text>(2R)-2-phosphoglycerate = (2R)-3-phosphoglycerate</text>
        <dbReference type="Rhea" id="RHEA:15901"/>
        <dbReference type="ChEBI" id="CHEBI:58272"/>
        <dbReference type="ChEBI" id="CHEBI:58289"/>
        <dbReference type="EC" id="5.4.2.12"/>
    </reaction>
</comment>
<comment type="pathway">
    <text evidence="1">Carbohydrate degradation; glycolysis; pyruvate from D-glyceraldehyde 3-phosphate: step 3/5.</text>
</comment>
<comment type="similarity">
    <text evidence="1">Belongs to the BPG-independent phosphoglycerate mutase family. A-PGAM subfamily.</text>
</comment>
<gene>
    <name evidence="1" type="primary">apgM</name>
    <name type="ordered locus">Pisl_1043</name>
</gene>